<dbReference type="EMBL" id="CP000305">
    <property type="protein sequence ID" value="ABG16633.1"/>
    <property type="molecule type" value="Genomic_DNA"/>
</dbReference>
<dbReference type="EMBL" id="ACNQ01000006">
    <property type="protein sequence ID" value="EEO78085.1"/>
    <property type="molecule type" value="Genomic_DNA"/>
</dbReference>
<dbReference type="RefSeq" id="WP_002209209.1">
    <property type="nucleotide sequence ID" value="NZ_ACNQ01000006.1"/>
</dbReference>
<dbReference type="SMR" id="Q1CMZ7"/>
<dbReference type="GeneID" id="57974180"/>
<dbReference type="KEGG" id="ypn:YPN_0301"/>
<dbReference type="HOGENOM" id="CLU_002794_2_1_6"/>
<dbReference type="Proteomes" id="UP000008936">
    <property type="component" value="Chromosome"/>
</dbReference>
<dbReference type="GO" id="GO:0005829">
    <property type="term" value="C:cytosol"/>
    <property type="evidence" value="ECO:0007669"/>
    <property type="project" value="TreeGrafter"/>
</dbReference>
<dbReference type="GO" id="GO:0005525">
    <property type="term" value="F:GTP binding"/>
    <property type="evidence" value="ECO:0007669"/>
    <property type="project" value="UniProtKB-UniRule"/>
</dbReference>
<dbReference type="GO" id="GO:0003924">
    <property type="term" value="F:GTPase activity"/>
    <property type="evidence" value="ECO:0007669"/>
    <property type="project" value="InterPro"/>
</dbReference>
<dbReference type="GO" id="GO:0097216">
    <property type="term" value="F:guanosine tetraphosphate binding"/>
    <property type="evidence" value="ECO:0007669"/>
    <property type="project" value="UniProtKB-ARBA"/>
</dbReference>
<dbReference type="GO" id="GO:0016150">
    <property type="term" value="F:translation release factor activity, codon nonspecific"/>
    <property type="evidence" value="ECO:0007669"/>
    <property type="project" value="TreeGrafter"/>
</dbReference>
<dbReference type="GO" id="GO:0016149">
    <property type="term" value="F:translation release factor activity, codon specific"/>
    <property type="evidence" value="ECO:0007669"/>
    <property type="project" value="UniProtKB-UniRule"/>
</dbReference>
<dbReference type="GO" id="GO:0006449">
    <property type="term" value="P:regulation of translational termination"/>
    <property type="evidence" value="ECO:0007669"/>
    <property type="project" value="UniProtKB-UniRule"/>
</dbReference>
<dbReference type="CDD" id="cd04169">
    <property type="entry name" value="RF3"/>
    <property type="match status" value="1"/>
</dbReference>
<dbReference type="CDD" id="cd03689">
    <property type="entry name" value="RF3_II"/>
    <property type="match status" value="1"/>
</dbReference>
<dbReference type="CDD" id="cd16259">
    <property type="entry name" value="RF3_III"/>
    <property type="match status" value="1"/>
</dbReference>
<dbReference type="FunFam" id="2.40.30.10:FF:000040">
    <property type="entry name" value="Peptide chain release factor 3"/>
    <property type="match status" value="1"/>
</dbReference>
<dbReference type="FunFam" id="3.30.70.3280:FF:000001">
    <property type="entry name" value="Peptide chain release factor 3"/>
    <property type="match status" value="1"/>
</dbReference>
<dbReference type="FunFam" id="3.40.50.300:FF:000542">
    <property type="entry name" value="Peptide chain release factor 3"/>
    <property type="match status" value="1"/>
</dbReference>
<dbReference type="Gene3D" id="3.40.50.300">
    <property type="entry name" value="P-loop containing nucleotide triphosphate hydrolases"/>
    <property type="match status" value="2"/>
</dbReference>
<dbReference type="Gene3D" id="3.30.70.3280">
    <property type="entry name" value="Peptide chain release factor 3, domain III"/>
    <property type="match status" value="1"/>
</dbReference>
<dbReference type="HAMAP" id="MF_00072">
    <property type="entry name" value="Rel_fac_3"/>
    <property type="match status" value="1"/>
</dbReference>
<dbReference type="InterPro" id="IPR053905">
    <property type="entry name" value="EF-G-like_DII"/>
</dbReference>
<dbReference type="InterPro" id="IPR035647">
    <property type="entry name" value="EFG_III/V"/>
</dbReference>
<dbReference type="InterPro" id="IPR031157">
    <property type="entry name" value="G_TR_CS"/>
</dbReference>
<dbReference type="InterPro" id="IPR027417">
    <property type="entry name" value="P-loop_NTPase"/>
</dbReference>
<dbReference type="InterPro" id="IPR004548">
    <property type="entry name" value="PrfC"/>
</dbReference>
<dbReference type="InterPro" id="IPR032090">
    <property type="entry name" value="RF3_C"/>
</dbReference>
<dbReference type="InterPro" id="IPR038467">
    <property type="entry name" value="RF3_dom_3_sf"/>
</dbReference>
<dbReference type="InterPro" id="IPR041732">
    <property type="entry name" value="RF3_GTP-bd"/>
</dbReference>
<dbReference type="InterPro" id="IPR005225">
    <property type="entry name" value="Small_GTP-bd"/>
</dbReference>
<dbReference type="InterPro" id="IPR000795">
    <property type="entry name" value="T_Tr_GTP-bd_dom"/>
</dbReference>
<dbReference type="InterPro" id="IPR009000">
    <property type="entry name" value="Transl_B-barrel_sf"/>
</dbReference>
<dbReference type="NCBIfam" id="TIGR00503">
    <property type="entry name" value="prfC"/>
    <property type="match status" value="1"/>
</dbReference>
<dbReference type="NCBIfam" id="NF001964">
    <property type="entry name" value="PRK00741.1"/>
    <property type="match status" value="1"/>
</dbReference>
<dbReference type="NCBIfam" id="TIGR00231">
    <property type="entry name" value="small_GTP"/>
    <property type="match status" value="1"/>
</dbReference>
<dbReference type="PANTHER" id="PTHR43556">
    <property type="entry name" value="PEPTIDE CHAIN RELEASE FACTOR RF3"/>
    <property type="match status" value="1"/>
</dbReference>
<dbReference type="PANTHER" id="PTHR43556:SF2">
    <property type="entry name" value="PEPTIDE CHAIN RELEASE FACTOR RF3"/>
    <property type="match status" value="1"/>
</dbReference>
<dbReference type="Pfam" id="PF22042">
    <property type="entry name" value="EF-G_D2"/>
    <property type="match status" value="1"/>
</dbReference>
<dbReference type="Pfam" id="PF00009">
    <property type="entry name" value="GTP_EFTU"/>
    <property type="match status" value="1"/>
</dbReference>
<dbReference type="Pfam" id="PF16658">
    <property type="entry name" value="RF3_C"/>
    <property type="match status" value="1"/>
</dbReference>
<dbReference type="PRINTS" id="PR00315">
    <property type="entry name" value="ELONGATNFCT"/>
</dbReference>
<dbReference type="SUPFAM" id="SSF54980">
    <property type="entry name" value="EF-G C-terminal domain-like"/>
    <property type="match status" value="1"/>
</dbReference>
<dbReference type="SUPFAM" id="SSF52540">
    <property type="entry name" value="P-loop containing nucleoside triphosphate hydrolases"/>
    <property type="match status" value="1"/>
</dbReference>
<dbReference type="SUPFAM" id="SSF50447">
    <property type="entry name" value="Translation proteins"/>
    <property type="match status" value="1"/>
</dbReference>
<dbReference type="PROSITE" id="PS00301">
    <property type="entry name" value="G_TR_1"/>
    <property type="match status" value="1"/>
</dbReference>
<dbReference type="PROSITE" id="PS51722">
    <property type="entry name" value="G_TR_2"/>
    <property type="match status" value="1"/>
</dbReference>
<reference key="1">
    <citation type="journal article" date="2006" name="J. Bacteriol.">
        <title>Complete genome sequence of Yersinia pestis strains Antiqua and Nepal516: evidence of gene reduction in an emerging pathogen.</title>
        <authorList>
            <person name="Chain P.S.G."/>
            <person name="Hu P."/>
            <person name="Malfatti S.A."/>
            <person name="Radnedge L."/>
            <person name="Larimer F."/>
            <person name="Vergez L.M."/>
            <person name="Worsham P."/>
            <person name="Chu M.C."/>
            <person name="Andersen G.L."/>
        </authorList>
    </citation>
    <scope>NUCLEOTIDE SEQUENCE [LARGE SCALE GENOMIC DNA]</scope>
    <source>
        <strain>Nepal516</strain>
    </source>
</reference>
<reference key="2">
    <citation type="submission" date="2009-04" db="EMBL/GenBank/DDBJ databases">
        <title>Yersinia pestis Nepal516A whole genome shotgun sequencing project.</title>
        <authorList>
            <person name="Plunkett G. III"/>
            <person name="Anderson B.D."/>
            <person name="Baumler D.J."/>
            <person name="Burland V."/>
            <person name="Cabot E.L."/>
            <person name="Glasner J.D."/>
            <person name="Mau B."/>
            <person name="Neeno-Eckwall E."/>
            <person name="Perna N.T."/>
            <person name="Munk A.C."/>
            <person name="Tapia R."/>
            <person name="Green L.D."/>
            <person name="Rogers Y.C."/>
            <person name="Detter J.C."/>
            <person name="Bruce D.C."/>
            <person name="Brettin T.S."/>
        </authorList>
    </citation>
    <scope>NUCLEOTIDE SEQUENCE [LARGE SCALE GENOMIC DNA]</scope>
    <source>
        <strain>Nepal516</strain>
    </source>
</reference>
<keyword id="KW-0963">Cytoplasm</keyword>
<keyword id="KW-0342">GTP-binding</keyword>
<keyword id="KW-0547">Nucleotide-binding</keyword>
<keyword id="KW-0648">Protein biosynthesis</keyword>
<evidence type="ECO:0000255" key="1">
    <source>
        <dbReference type="HAMAP-Rule" id="MF_00072"/>
    </source>
</evidence>
<comment type="function">
    <text evidence="1">Increases the formation of ribosomal termination complexes and stimulates activities of RF-1 and RF-2. It binds guanine nucleotides and has strong preference for UGA stop codons. It may interact directly with the ribosome. The stimulation of RF-1 and RF-2 is significantly reduced by GTP and GDP, but not by GMP.</text>
</comment>
<comment type="subcellular location">
    <subcellularLocation>
        <location evidence="1">Cytoplasm</location>
    </subcellularLocation>
</comment>
<comment type="similarity">
    <text evidence="1">Belongs to the TRAFAC class translation factor GTPase superfamily. Classic translation factor GTPase family. PrfC subfamily.</text>
</comment>
<protein>
    <recommendedName>
        <fullName evidence="1">Peptide chain release factor 3</fullName>
        <shortName evidence="1">RF-3</shortName>
    </recommendedName>
</protein>
<organism>
    <name type="scientific">Yersinia pestis bv. Antiqua (strain Nepal516)</name>
    <dbReference type="NCBI Taxonomy" id="377628"/>
    <lineage>
        <taxon>Bacteria</taxon>
        <taxon>Pseudomonadati</taxon>
        <taxon>Pseudomonadota</taxon>
        <taxon>Gammaproteobacteria</taxon>
        <taxon>Enterobacterales</taxon>
        <taxon>Yersiniaceae</taxon>
        <taxon>Yersinia</taxon>
    </lineage>
</organism>
<proteinExistence type="inferred from homology"/>
<name>RF3_YERPN</name>
<gene>
    <name evidence="1" type="primary">prfC</name>
    <name type="ordered locus">YPN_0301</name>
    <name type="ORF">YP516_0304</name>
</gene>
<accession>Q1CMZ7</accession>
<accession>C4GNK3</accession>
<feature type="chain" id="PRO_1000023698" description="Peptide chain release factor 3">
    <location>
        <begin position="1"/>
        <end position="529"/>
    </location>
</feature>
<feature type="domain" description="tr-type G">
    <location>
        <begin position="11"/>
        <end position="280"/>
    </location>
</feature>
<feature type="binding site" evidence="1">
    <location>
        <begin position="20"/>
        <end position="27"/>
    </location>
    <ligand>
        <name>GTP</name>
        <dbReference type="ChEBI" id="CHEBI:37565"/>
    </ligand>
</feature>
<feature type="binding site" evidence="1">
    <location>
        <begin position="88"/>
        <end position="92"/>
    </location>
    <ligand>
        <name>GTP</name>
        <dbReference type="ChEBI" id="CHEBI:37565"/>
    </ligand>
</feature>
<feature type="binding site" evidence="1">
    <location>
        <begin position="142"/>
        <end position="145"/>
    </location>
    <ligand>
        <name>GTP</name>
        <dbReference type="ChEBI" id="CHEBI:37565"/>
    </ligand>
</feature>
<sequence length="529" mass="59640">MSPSEYALEVAKRRTFAIISHPDAGKTTITEKVLLFGHAIQTAGTVKGRGSSHHAKSDWMEMEKQRGISITTSVMQFPYGGCLVNLLDTPGHEDFSEDTYRTLTAVDCCLMVIDAAKGVEDRTRKLMEVTRLRDTPILTFMNKLDREIRDPMEVLDEVERELNIACSPITWPIGCGKSFKGVYHLHKDETYLYQSGKGHTIQEVRIVKGLNNPDLDVAVGEDLAKQFRQELELVQGASHEFDHEAFLSGDLTPVFFGTALGNFGVDHMLDGLVEWAPAPMPRKTDTRVVVASEEKFTGFVFKIQANMDPKHRDRVAFMRVVSGRFEKGMKLRQVRTKKDVVISDALTFMAGDRSHVEEAYAGDIIGLHNHGTIQIGDTFTQGEDMKFTGIPNFAPELFRRIRLRDPLKQKQLLKGLVQLSEEGAVQVFRPLSNNDLIVGAVGVLQFEVVSSRLKSEYNVEAVYESVNVSTARWVECHDVKKFEEFKRKNELNLALDGGDNLSYIAPTMVNLNITQERYPDVIFRKTREH</sequence>